<dbReference type="EC" id="2.7.1.144" evidence="1"/>
<dbReference type="EMBL" id="CP000936">
    <property type="protein sequence ID" value="ACA36637.1"/>
    <property type="molecule type" value="Genomic_DNA"/>
</dbReference>
<dbReference type="RefSeq" id="WP_000604272.1">
    <property type="nucleotide sequence ID" value="NC_010380.1"/>
</dbReference>
<dbReference type="SMR" id="B1IBZ5"/>
<dbReference type="KEGG" id="spv:SPH_1309"/>
<dbReference type="HOGENOM" id="CLU_050013_5_0_9"/>
<dbReference type="UniPathway" id="UPA00704">
    <property type="reaction ID" value="UER00715"/>
</dbReference>
<dbReference type="Proteomes" id="UP000002163">
    <property type="component" value="Chromosome"/>
</dbReference>
<dbReference type="GO" id="GO:0005829">
    <property type="term" value="C:cytosol"/>
    <property type="evidence" value="ECO:0007669"/>
    <property type="project" value="TreeGrafter"/>
</dbReference>
<dbReference type="GO" id="GO:0005524">
    <property type="term" value="F:ATP binding"/>
    <property type="evidence" value="ECO:0007669"/>
    <property type="project" value="UniProtKB-KW"/>
</dbReference>
<dbReference type="GO" id="GO:0008443">
    <property type="term" value="F:phosphofructokinase activity"/>
    <property type="evidence" value="ECO:0007669"/>
    <property type="project" value="TreeGrafter"/>
</dbReference>
<dbReference type="GO" id="GO:0009024">
    <property type="term" value="F:tagatose-6-phosphate kinase activity"/>
    <property type="evidence" value="ECO:0007669"/>
    <property type="project" value="UniProtKB-UniRule"/>
</dbReference>
<dbReference type="GO" id="GO:2001059">
    <property type="term" value="P:D-tagatose 6-phosphate catabolic process"/>
    <property type="evidence" value="ECO:0007669"/>
    <property type="project" value="UniProtKB-UniRule"/>
</dbReference>
<dbReference type="GO" id="GO:0019512">
    <property type="term" value="P:lactose catabolic process via tagatose-6-phosphate"/>
    <property type="evidence" value="ECO:0007669"/>
    <property type="project" value="InterPro"/>
</dbReference>
<dbReference type="CDD" id="cd01164">
    <property type="entry name" value="FruK_PfkB_like"/>
    <property type="match status" value="1"/>
</dbReference>
<dbReference type="FunFam" id="3.40.1190.20:FF:000001">
    <property type="entry name" value="Phosphofructokinase"/>
    <property type="match status" value="1"/>
</dbReference>
<dbReference type="Gene3D" id="3.40.1190.20">
    <property type="match status" value="1"/>
</dbReference>
<dbReference type="HAMAP" id="MF_01557">
    <property type="entry name" value="LacC"/>
    <property type="match status" value="1"/>
</dbReference>
<dbReference type="InterPro" id="IPR002173">
    <property type="entry name" value="Carboh/pur_kinase_PfkB_CS"/>
</dbReference>
<dbReference type="InterPro" id="IPR005926">
    <property type="entry name" value="LacC"/>
</dbReference>
<dbReference type="InterPro" id="IPR011611">
    <property type="entry name" value="PfkB_dom"/>
</dbReference>
<dbReference type="InterPro" id="IPR029056">
    <property type="entry name" value="Ribokinase-like"/>
</dbReference>
<dbReference type="InterPro" id="IPR017583">
    <property type="entry name" value="Tagatose/fructose_Pkinase"/>
</dbReference>
<dbReference type="NCBIfam" id="TIGR03168">
    <property type="entry name" value="1-PFK"/>
    <property type="match status" value="1"/>
</dbReference>
<dbReference type="NCBIfam" id="TIGR01231">
    <property type="entry name" value="lacC"/>
    <property type="match status" value="1"/>
</dbReference>
<dbReference type="NCBIfam" id="NF010033">
    <property type="entry name" value="PRK13508.1"/>
    <property type="match status" value="1"/>
</dbReference>
<dbReference type="PANTHER" id="PTHR46566:SF5">
    <property type="entry name" value="1-PHOSPHOFRUCTOKINASE"/>
    <property type="match status" value="1"/>
</dbReference>
<dbReference type="PANTHER" id="PTHR46566">
    <property type="entry name" value="1-PHOSPHOFRUCTOKINASE-RELATED"/>
    <property type="match status" value="1"/>
</dbReference>
<dbReference type="Pfam" id="PF00294">
    <property type="entry name" value="PfkB"/>
    <property type="match status" value="1"/>
</dbReference>
<dbReference type="PIRSF" id="PIRSF000535">
    <property type="entry name" value="1PFK/6PFK/LacC"/>
    <property type="match status" value="1"/>
</dbReference>
<dbReference type="SUPFAM" id="SSF53613">
    <property type="entry name" value="Ribokinase-like"/>
    <property type="match status" value="1"/>
</dbReference>
<dbReference type="PROSITE" id="PS00583">
    <property type="entry name" value="PFKB_KINASES_1"/>
    <property type="match status" value="1"/>
</dbReference>
<dbReference type="PROSITE" id="PS00584">
    <property type="entry name" value="PFKB_KINASES_2"/>
    <property type="match status" value="1"/>
</dbReference>
<name>LACC_STRPI</name>
<organism>
    <name type="scientific">Streptococcus pneumoniae (strain Hungary19A-6)</name>
    <dbReference type="NCBI Taxonomy" id="487214"/>
    <lineage>
        <taxon>Bacteria</taxon>
        <taxon>Bacillati</taxon>
        <taxon>Bacillota</taxon>
        <taxon>Bacilli</taxon>
        <taxon>Lactobacillales</taxon>
        <taxon>Streptococcaceae</taxon>
        <taxon>Streptococcus</taxon>
    </lineage>
</organism>
<proteinExistence type="inferred from homology"/>
<comment type="catalytic activity">
    <reaction evidence="1">
        <text>D-tagatofuranose 6-phosphate + ATP = D-tagatofuranose 1,6-bisphosphate + ADP + H(+)</text>
        <dbReference type="Rhea" id="RHEA:12420"/>
        <dbReference type="ChEBI" id="CHEBI:15378"/>
        <dbReference type="ChEBI" id="CHEBI:30616"/>
        <dbReference type="ChEBI" id="CHEBI:58694"/>
        <dbReference type="ChEBI" id="CHEBI:58695"/>
        <dbReference type="ChEBI" id="CHEBI:456216"/>
        <dbReference type="EC" id="2.7.1.144"/>
    </reaction>
</comment>
<comment type="pathway">
    <text evidence="1">Carbohydrate metabolism; D-tagatose 6-phosphate degradation; D-glyceraldehyde 3-phosphate and glycerone phosphate from D-tagatose 6-phosphate: step 1/2.</text>
</comment>
<comment type="similarity">
    <text evidence="1">Belongs to the carbohydrate kinase PfkB family. LacC subfamily.</text>
</comment>
<feature type="chain" id="PRO_1000147090" description="Tagatose-6-phosphate kinase">
    <location>
        <begin position="1"/>
        <end position="309"/>
    </location>
</feature>
<evidence type="ECO:0000255" key="1">
    <source>
        <dbReference type="HAMAP-Rule" id="MF_01557"/>
    </source>
</evidence>
<gene>
    <name evidence="1" type="primary">lacC</name>
    <name type="ordered locus">SPH_1309</name>
</gene>
<sequence>MILTVTMNPSIDISYPLDELKIDTVNRVVDVTKTAGGKGLNVTRVLSEFGDSVLATGLVGGKLGEFLVEHIDNQVKKDFFSIQGETRNCIAILHGDNQTEVLEKGPEVLEQEGQDFLEHFKKLLESVEVVAISGSLPAGLPVDYYASLVELANQAGKPVVLDCSGAALQAVLESPHKPTVIKPNNEELSQLLGREVSEDLDELKEVLQEPLFAGIEWIIVSLGANGTFAKHGDTFYKVDIPRIQVVNPVGSGDSTVAGISSGLLHKESDAELLIKANVLGMLNAQEKMTGHVNMANYQALYDQLIVKEV</sequence>
<keyword id="KW-0067">ATP-binding</keyword>
<keyword id="KW-0418">Kinase</keyword>
<keyword id="KW-0423">Lactose metabolism</keyword>
<keyword id="KW-0547">Nucleotide-binding</keyword>
<keyword id="KW-0808">Transferase</keyword>
<accession>B1IBZ5</accession>
<protein>
    <recommendedName>
        <fullName evidence="1">Tagatose-6-phosphate kinase</fullName>
        <ecNumber evidence="1">2.7.1.144</ecNumber>
    </recommendedName>
    <alternativeName>
        <fullName evidence="1">Phosphotagatokinase</fullName>
    </alternativeName>
</protein>
<reference key="1">
    <citation type="journal article" date="2010" name="Genome Biol.">
        <title>Structure and dynamics of the pan-genome of Streptococcus pneumoniae and closely related species.</title>
        <authorList>
            <person name="Donati C."/>
            <person name="Hiller N.L."/>
            <person name="Tettelin H."/>
            <person name="Muzzi A."/>
            <person name="Croucher N.J."/>
            <person name="Angiuoli S.V."/>
            <person name="Oggioni M."/>
            <person name="Dunning Hotopp J.C."/>
            <person name="Hu F.Z."/>
            <person name="Riley D.R."/>
            <person name="Covacci A."/>
            <person name="Mitchell T.J."/>
            <person name="Bentley S.D."/>
            <person name="Kilian M."/>
            <person name="Ehrlich G.D."/>
            <person name="Rappuoli R."/>
            <person name="Moxon E.R."/>
            <person name="Masignani V."/>
        </authorList>
    </citation>
    <scope>NUCLEOTIDE SEQUENCE [LARGE SCALE GENOMIC DNA]</scope>
    <source>
        <strain>Hungary19A-6</strain>
    </source>
</reference>